<sequence length="385" mass="44157">MKKPIIEFKNVSKVFEDSNTKVLKDINFELEEGKFYTLLGASGSGKSTILNIIAGLLDATTGDIMLDGVRINDIPTNKRDVHTVFQSYALFPHMNVFENVAFPLRLRKIDKKEIEQRVAEVLKMVQLEGYEKRSIRKLSGGQRQRVAIARAIINQPRVVLLDEPLSALDLKLRTDMQYELRELQQRLGITFVFVTHDQEEALAMSDWIFVMNDGEIVQSGTPVDIYDEPINHFVATFIGESNILPGTMIEDYLVEFNGKRFEAVDGGMKPNEPVEVVIRPEDLRITLPEEGKLQVKVDTQLFRGVHYEIIAYDELGNEWMIHSTRKAIVGEEIGLDFEPEDIHIMRLNETEEEFDARIEEYVEIEEQEAGLINAIEEERDEENKL</sequence>
<protein>
    <recommendedName>
        <fullName evidence="1">Spermidine/putrescine import ATP-binding protein PotA</fullName>
        <ecNumber evidence="1">7.6.2.11</ecNumber>
    </recommendedName>
</protein>
<organism>
    <name type="scientific">Streptococcus pneumoniae serotype 4 (strain ATCC BAA-334 / TIGR4)</name>
    <dbReference type="NCBI Taxonomy" id="170187"/>
    <lineage>
        <taxon>Bacteria</taxon>
        <taxon>Bacillati</taxon>
        <taxon>Bacillota</taxon>
        <taxon>Bacilli</taxon>
        <taxon>Lactobacillales</taxon>
        <taxon>Streptococcaceae</taxon>
        <taxon>Streptococcus</taxon>
    </lineage>
</organism>
<evidence type="ECO:0000255" key="1">
    <source>
        <dbReference type="HAMAP-Rule" id="MF_01726"/>
    </source>
</evidence>
<accession>Q97Q42</accession>
<feature type="chain" id="PRO_0000286302" description="Spermidine/putrescine import ATP-binding protein PotA">
    <location>
        <begin position="1"/>
        <end position="385"/>
    </location>
</feature>
<feature type="domain" description="ABC transporter" evidence="1">
    <location>
        <begin position="6"/>
        <end position="238"/>
    </location>
</feature>
<feature type="binding site" evidence="1">
    <location>
        <begin position="40"/>
        <end position="47"/>
    </location>
    <ligand>
        <name>ATP</name>
        <dbReference type="ChEBI" id="CHEBI:30616"/>
    </ligand>
</feature>
<name>POTA_STRPN</name>
<gene>
    <name evidence="1" type="primary">potA</name>
    <name type="ordered locus">SP_1389</name>
</gene>
<comment type="function">
    <text evidence="1">Part of the ABC transporter complex PotABCD involved in spermidine/putrescine import. Responsible for energy coupling to the transport system.</text>
</comment>
<comment type="catalytic activity">
    <reaction evidence="1">
        <text>ATP + H2O + polyamine-[polyamine-binding protein]Side 1 = ADP + phosphate + polyamineSide 2 + [polyamine-binding protein]Side 1.</text>
        <dbReference type="EC" id="7.6.2.11"/>
    </reaction>
</comment>
<comment type="subunit">
    <text evidence="1">The complex is composed of two ATP-binding proteins (PotA), two transmembrane proteins (PotB and PotC) and a solute-binding protein (PotD).</text>
</comment>
<comment type="subcellular location">
    <subcellularLocation>
        <location evidence="1">Cell membrane</location>
        <topology evidence="1">Peripheral membrane protein</topology>
    </subcellularLocation>
</comment>
<comment type="similarity">
    <text evidence="1">Belongs to the ABC transporter superfamily. Spermidine/putrescine importer (TC 3.A.1.11.1) family.</text>
</comment>
<dbReference type="EC" id="7.6.2.11" evidence="1"/>
<dbReference type="EMBL" id="AE005672">
    <property type="protein sequence ID" value="AAK75487.1"/>
    <property type="molecule type" value="Genomic_DNA"/>
</dbReference>
<dbReference type="PIR" id="F95161">
    <property type="entry name" value="F95161"/>
</dbReference>
<dbReference type="RefSeq" id="WP_000742913.1">
    <property type="nucleotide sequence ID" value="NZ_CP155539.1"/>
</dbReference>
<dbReference type="SMR" id="Q97Q42"/>
<dbReference type="TCDB" id="3.A.1.11.7">
    <property type="family name" value="the atp-binding cassette (abc) superfamily"/>
</dbReference>
<dbReference type="PaxDb" id="170187-SP_1389"/>
<dbReference type="EnsemblBacteria" id="AAK75487">
    <property type="protein sequence ID" value="AAK75487"/>
    <property type="gene ID" value="SP_1389"/>
</dbReference>
<dbReference type="KEGG" id="spn:SP_1389"/>
<dbReference type="eggNOG" id="COG3842">
    <property type="taxonomic scope" value="Bacteria"/>
</dbReference>
<dbReference type="PhylomeDB" id="Q97Q42"/>
<dbReference type="BioCyc" id="SPNE170187:G1FZB-1398-MONOMER"/>
<dbReference type="Proteomes" id="UP000000585">
    <property type="component" value="Chromosome"/>
</dbReference>
<dbReference type="GO" id="GO:0043190">
    <property type="term" value="C:ATP-binding cassette (ABC) transporter complex"/>
    <property type="evidence" value="ECO:0007669"/>
    <property type="project" value="InterPro"/>
</dbReference>
<dbReference type="GO" id="GO:0015417">
    <property type="term" value="F:ABC-type polyamine transporter activity"/>
    <property type="evidence" value="ECO:0007669"/>
    <property type="project" value="UniProtKB-EC"/>
</dbReference>
<dbReference type="GO" id="GO:0005524">
    <property type="term" value="F:ATP binding"/>
    <property type="evidence" value="ECO:0007669"/>
    <property type="project" value="UniProtKB-KW"/>
</dbReference>
<dbReference type="GO" id="GO:0016887">
    <property type="term" value="F:ATP hydrolysis activity"/>
    <property type="evidence" value="ECO:0007669"/>
    <property type="project" value="InterPro"/>
</dbReference>
<dbReference type="FunFam" id="3.40.50.300:FF:000042">
    <property type="entry name" value="Maltose/maltodextrin ABC transporter, ATP-binding protein"/>
    <property type="match status" value="1"/>
</dbReference>
<dbReference type="Gene3D" id="2.40.50.100">
    <property type="match status" value="1"/>
</dbReference>
<dbReference type="Gene3D" id="3.40.50.300">
    <property type="entry name" value="P-loop containing nucleotide triphosphate hydrolases"/>
    <property type="match status" value="1"/>
</dbReference>
<dbReference type="InterPro" id="IPR003593">
    <property type="entry name" value="AAA+_ATPase"/>
</dbReference>
<dbReference type="InterPro" id="IPR050093">
    <property type="entry name" value="ABC_SmlMolc_Importer"/>
</dbReference>
<dbReference type="InterPro" id="IPR003439">
    <property type="entry name" value="ABC_transporter-like_ATP-bd"/>
</dbReference>
<dbReference type="InterPro" id="IPR017871">
    <property type="entry name" value="ABC_transporter-like_CS"/>
</dbReference>
<dbReference type="InterPro" id="IPR008995">
    <property type="entry name" value="Mo/tungstate-bd_C_term_dom"/>
</dbReference>
<dbReference type="InterPro" id="IPR027417">
    <property type="entry name" value="P-loop_NTPase"/>
</dbReference>
<dbReference type="InterPro" id="IPR005893">
    <property type="entry name" value="PotA-like"/>
</dbReference>
<dbReference type="InterPro" id="IPR013611">
    <property type="entry name" value="Transp-assoc_OB_typ2"/>
</dbReference>
<dbReference type="NCBIfam" id="TIGR01187">
    <property type="entry name" value="potA"/>
    <property type="match status" value="1"/>
</dbReference>
<dbReference type="PANTHER" id="PTHR42781">
    <property type="entry name" value="SPERMIDINE/PUTRESCINE IMPORT ATP-BINDING PROTEIN POTA"/>
    <property type="match status" value="1"/>
</dbReference>
<dbReference type="PANTHER" id="PTHR42781:SF4">
    <property type="entry name" value="SPERMIDINE_PUTRESCINE IMPORT ATP-BINDING PROTEIN POTA"/>
    <property type="match status" value="1"/>
</dbReference>
<dbReference type="Pfam" id="PF00005">
    <property type="entry name" value="ABC_tran"/>
    <property type="match status" value="1"/>
</dbReference>
<dbReference type="Pfam" id="PF08402">
    <property type="entry name" value="TOBE_2"/>
    <property type="match status" value="1"/>
</dbReference>
<dbReference type="SMART" id="SM00382">
    <property type="entry name" value="AAA"/>
    <property type="match status" value="1"/>
</dbReference>
<dbReference type="SUPFAM" id="SSF50331">
    <property type="entry name" value="MOP-like"/>
    <property type="match status" value="1"/>
</dbReference>
<dbReference type="SUPFAM" id="SSF52540">
    <property type="entry name" value="P-loop containing nucleoside triphosphate hydrolases"/>
    <property type="match status" value="1"/>
</dbReference>
<dbReference type="PROSITE" id="PS00211">
    <property type="entry name" value="ABC_TRANSPORTER_1"/>
    <property type="match status" value="1"/>
</dbReference>
<dbReference type="PROSITE" id="PS50893">
    <property type="entry name" value="ABC_TRANSPORTER_2"/>
    <property type="match status" value="1"/>
</dbReference>
<dbReference type="PROSITE" id="PS51305">
    <property type="entry name" value="POTA"/>
    <property type="match status" value="1"/>
</dbReference>
<proteinExistence type="inferred from homology"/>
<keyword id="KW-0067">ATP-binding</keyword>
<keyword id="KW-1003">Cell membrane</keyword>
<keyword id="KW-0472">Membrane</keyword>
<keyword id="KW-0547">Nucleotide-binding</keyword>
<keyword id="KW-1185">Reference proteome</keyword>
<keyword id="KW-1278">Translocase</keyword>
<keyword id="KW-0813">Transport</keyword>
<reference key="1">
    <citation type="journal article" date="2001" name="Science">
        <title>Complete genome sequence of a virulent isolate of Streptococcus pneumoniae.</title>
        <authorList>
            <person name="Tettelin H."/>
            <person name="Nelson K.E."/>
            <person name="Paulsen I.T."/>
            <person name="Eisen J.A."/>
            <person name="Read T.D."/>
            <person name="Peterson S.N."/>
            <person name="Heidelberg J.F."/>
            <person name="DeBoy R.T."/>
            <person name="Haft D.H."/>
            <person name="Dodson R.J."/>
            <person name="Durkin A.S."/>
            <person name="Gwinn M.L."/>
            <person name="Kolonay J.F."/>
            <person name="Nelson W.C."/>
            <person name="Peterson J.D."/>
            <person name="Umayam L.A."/>
            <person name="White O."/>
            <person name="Salzberg S.L."/>
            <person name="Lewis M.R."/>
            <person name="Radune D."/>
            <person name="Holtzapple E.K."/>
            <person name="Khouri H.M."/>
            <person name="Wolf A.M."/>
            <person name="Utterback T.R."/>
            <person name="Hansen C.L."/>
            <person name="McDonald L.A."/>
            <person name="Feldblyum T.V."/>
            <person name="Angiuoli S.V."/>
            <person name="Dickinson T."/>
            <person name="Hickey E.K."/>
            <person name="Holt I.E."/>
            <person name="Loftus B.J."/>
            <person name="Yang F."/>
            <person name="Smith H.O."/>
            <person name="Venter J.C."/>
            <person name="Dougherty B.A."/>
            <person name="Morrison D.A."/>
            <person name="Hollingshead S.K."/>
            <person name="Fraser C.M."/>
        </authorList>
    </citation>
    <scope>NUCLEOTIDE SEQUENCE [LARGE SCALE GENOMIC DNA]</scope>
    <source>
        <strain>ATCC BAA-334 / TIGR4</strain>
    </source>
</reference>